<protein>
    <recommendedName>
        <fullName evidence="1">Large ribosomal subunit protein uL22</fullName>
    </recommendedName>
    <alternativeName>
        <fullName evidence="2">50S ribosomal protein L22</fullName>
    </alternativeName>
</protein>
<reference key="1">
    <citation type="journal article" date="2008" name="Genome Biol.">
        <title>A genomic analysis of the archaeal system Ignicoccus hospitalis-Nanoarchaeum equitans.</title>
        <authorList>
            <person name="Podar M."/>
            <person name="Anderson I."/>
            <person name="Makarova K.S."/>
            <person name="Elkins J.G."/>
            <person name="Ivanova N."/>
            <person name="Wall M.A."/>
            <person name="Lykidis A."/>
            <person name="Mavromatis K."/>
            <person name="Sun H."/>
            <person name="Hudson M.E."/>
            <person name="Chen W."/>
            <person name="Deciu C."/>
            <person name="Hutchison D."/>
            <person name="Eads J.R."/>
            <person name="Anderson A."/>
            <person name="Fernandes F."/>
            <person name="Szeto E."/>
            <person name="Lapidus A."/>
            <person name="Kyrpides N.C."/>
            <person name="Saier M.H. Jr."/>
            <person name="Richardson P.M."/>
            <person name="Rachel R."/>
            <person name="Huber H."/>
            <person name="Eisen J.A."/>
            <person name="Koonin E.V."/>
            <person name="Keller M."/>
            <person name="Stetter K.O."/>
        </authorList>
    </citation>
    <scope>NUCLEOTIDE SEQUENCE [LARGE SCALE GENOMIC DNA]</scope>
    <source>
        <strain>KIN4/I / DSM 18386 / JCM 14125</strain>
    </source>
</reference>
<keyword id="KW-1185">Reference proteome</keyword>
<keyword id="KW-0687">Ribonucleoprotein</keyword>
<keyword id="KW-0689">Ribosomal protein</keyword>
<keyword id="KW-0694">RNA-binding</keyword>
<keyword id="KW-0699">rRNA-binding</keyword>
<feature type="chain" id="PRO_1000052586" description="Large ribosomal subunit protein uL22">
    <location>
        <begin position="1"/>
        <end position="159"/>
    </location>
</feature>
<comment type="function">
    <text evidence="1">This protein binds specifically to 23S rRNA. It makes multiple contacts with different domains of the 23S rRNA in the assembled 50S subunit and ribosome.</text>
</comment>
<comment type="function">
    <text evidence="1">The globular domain of the protein is located near the polypeptide exit tunnel on the outside of the subunit, while an extended beta-hairpin is found that lines the wall of the exit tunnel in the center of the 70S ribosome.</text>
</comment>
<comment type="subunit">
    <text evidence="1">Part of the 50S ribosomal subunit.</text>
</comment>
<comment type="similarity">
    <text evidence="1">Belongs to the universal ribosomal protein uL22 family.</text>
</comment>
<accession>A8AA19</accession>
<dbReference type="EMBL" id="CP000816">
    <property type="protein sequence ID" value="ABU81771.1"/>
    <property type="molecule type" value="Genomic_DNA"/>
</dbReference>
<dbReference type="RefSeq" id="WP_011998623.1">
    <property type="nucleotide sequence ID" value="NC_009776.1"/>
</dbReference>
<dbReference type="SMR" id="A8AA19"/>
<dbReference type="STRING" id="453591.Igni_0589"/>
<dbReference type="GeneID" id="5562881"/>
<dbReference type="KEGG" id="iho:Igni_0589"/>
<dbReference type="eggNOG" id="arCOG04098">
    <property type="taxonomic scope" value="Archaea"/>
</dbReference>
<dbReference type="HOGENOM" id="CLU_083987_0_2_2"/>
<dbReference type="OrthoDB" id="314984at2157"/>
<dbReference type="PhylomeDB" id="A8AA19"/>
<dbReference type="Proteomes" id="UP000000262">
    <property type="component" value="Chromosome"/>
</dbReference>
<dbReference type="GO" id="GO:0022625">
    <property type="term" value="C:cytosolic large ribosomal subunit"/>
    <property type="evidence" value="ECO:0007669"/>
    <property type="project" value="TreeGrafter"/>
</dbReference>
<dbReference type="GO" id="GO:0019843">
    <property type="term" value="F:rRNA binding"/>
    <property type="evidence" value="ECO:0007669"/>
    <property type="project" value="UniProtKB-UniRule"/>
</dbReference>
<dbReference type="GO" id="GO:0003735">
    <property type="term" value="F:structural constituent of ribosome"/>
    <property type="evidence" value="ECO:0007669"/>
    <property type="project" value="InterPro"/>
</dbReference>
<dbReference type="GO" id="GO:0002181">
    <property type="term" value="P:cytoplasmic translation"/>
    <property type="evidence" value="ECO:0007669"/>
    <property type="project" value="TreeGrafter"/>
</dbReference>
<dbReference type="CDD" id="cd00336">
    <property type="entry name" value="Ribosomal_L22"/>
    <property type="match status" value="1"/>
</dbReference>
<dbReference type="Gene3D" id="3.90.470.10">
    <property type="entry name" value="Ribosomal protein L22/L17"/>
    <property type="match status" value="1"/>
</dbReference>
<dbReference type="HAMAP" id="MF_01331_A">
    <property type="entry name" value="Ribosomal_uL22_A"/>
    <property type="match status" value="1"/>
</dbReference>
<dbReference type="InterPro" id="IPR001063">
    <property type="entry name" value="Ribosomal_uL22"/>
</dbReference>
<dbReference type="InterPro" id="IPR018260">
    <property type="entry name" value="Ribosomal_uL22_CS"/>
</dbReference>
<dbReference type="InterPro" id="IPR005721">
    <property type="entry name" value="Ribosomal_uL22_euk/arc"/>
</dbReference>
<dbReference type="InterPro" id="IPR036394">
    <property type="entry name" value="Ribosomal_uL22_sf"/>
</dbReference>
<dbReference type="NCBIfam" id="NF003260">
    <property type="entry name" value="PRK04223.1"/>
    <property type="match status" value="1"/>
</dbReference>
<dbReference type="NCBIfam" id="TIGR01038">
    <property type="entry name" value="uL22_arch_euk"/>
    <property type="match status" value="1"/>
</dbReference>
<dbReference type="PANTHER" id="PTHR11593">
    <property type="entry name" value="60S RIBOSOMAL PROTEIN L17"/>
    <property type="match status" value="1"/>
</dbReference>
<dbReference type="PANTHER" id="PTHR11593:SF10">
    <property type="entry name" value="60S RIBOSOMAL PROTEIN L17"/>
    <property type="match status" value="1"/>
</dbReference>
<dbReference type="Pfam" id="PF00237">
    <property type="entry name" value="Ribosomal_L22"/>
    <property type="match status" value="1"/>
</dbReference>
<dbReference type="SUPFAM" id="SSF54843">
    <property type="entry name" value="Ribosomal protein L22"/>
    <property type="match status" value="1"/>
</dbReference>
<dbReference type="PROSITE" id="PS00464">
    <property type="entry name" value="RIBOSOMAL_L22"/>
    <property type="match status" value="1"/>
</dbReference>
<name>RL22_IGNH4</name>
<evidence type="ECO:0000255" key="1">
    <source>
        <dbReference type="HAMAP-Rule" id="MF_01331"/>
    </source>
</evidence>
<evidence type="ECO:0000305" key="2"/>
<proteinExistence type="inferred from homology"/>
<sequence>MPTWHYSTDIAEKNPEKTAKAMMWDAPISPKEATELARVIRGMKLTEAKAYLERVIKMEEPVPYRRYHGKVAHKRGLADKHGIPMGRYPVKAAKYFLKLLKNVEANAEFKGLEVEKLKIVHIASHKGMTIKRWMPRAFGRATPEFERRTHLEVIVEEVE</sequence>
<organism>
    <name type="scientific">Ignicoccus hospitalis (strain KIN4/I / DSM 18386 / JCM 14125)</name>
    <dbReference type="NCBI Taxonomy" id="453591"/>
    <lineage>
        <taxon>Archaea</taxon>
        <taxon>Thermoproteota</taxon>
        <taxon>Thermoprotei</taxon>
        <taxon>Desulfurococcales</taxon>
        <taxon>Desulfurococcaceae</taxon>
        <taxon>Ignicoccus</taxon>
    </lineage>
</organism>
<gene>
    <name evidence="1" type="primary">rpl22</name>
    <name type="ordered locus">Igni_0589</name>
</gene>